<accession>Q8UDM3</accession>
<feature type="chain" id="PRO_0000101860" description="UDP-N-acetylmuramoyl-L-alanyl-D-glutamate--2,6-diaminopimelate ligase">
    <location>
        <begin position="1"/>
        <end position="489"/>
    </location>
</feature>
<feature type="short sequence motif" description="Meso-diaminopimelate recognition motif">
    <location>
        <begin position="407"/>
        <end position="410"/>
    </location>
</feature>
<feature type="binding site" evidence="1">
    <location>
        <position position="34"/>
    </location>
    <ligand>
        <name>UDP-N-acetyl-alpha-D-muramoyl-L-alanyl-D-glutamate</name>
        <dbReference type="ChEBI" id="CHEBI:83900"/>
    </ligand>
</feature>
<feature type="binding site" evidence="1">
    <location>
        <begin position="110"/>
        <end position="116"/>
    </location>
    <ligand>
        <name>ATP</name>
        <dbReference type="ChEBI" id="CHEBI:30616"/>
    </ligand>
</feature>
<feature type="binding site" evidence="1">
    <location>
        <begin position="152"/>
        <end position="153"/>
    </location>
    <ligand>
        <name>UDP-N-acetyl-alpha-D-muramoyl-L-alanyl-D-glutamate</name>
        <dbReference type="ChEBI" id="CHEBI:83900"/>
    </ligand>
</feature>
<feature type="binding site" evidence="1">
    <location>
        <position position="179"/>
    </location>
    <ligand>
        <name>UDP-N-acetyl-alpha-D-muramoyl-L-alanyl-D-glutamate</name>
        <dbReference type="ChEBI" id="CHEBI:83900"/>
    </ligand>
</feature>
<feature type="binding site" evidence="1">
    <location>
        <position position="185"/>
    </location>
    <ligand>
        <name>UDP-N-acetyl-alpha-D-muramoyl-L-alanyl-D-glutamate</name>
        <dbReference type="ChEBI" id="CHEBI:83900"/>
    </ligand>
</feature>
<feature type="binding site" evidence="1">
    <location>
        <position position="187"/>
    </location>
    <ligand>
        <name>UDP-N-acetyl-alpha-D-muramoyl-L-alanyl-D-glutamate</name>
        <dbReference type="ChEBI" id="CHEBI:83900"/>
    </ligand>
</feature>
<feature type="binding site" evidence="1">
    <location>
        <position position="383"/>
    </location>
    <ligand>
        <name>meso-2,6-diaminopimelate</name>
        <dbReference type="ChEBI" id="CHEBI:57791"/>
    </ligand>
</feature>
<feature type="binding site" evidence="1">
    <location>
        <begin position="407"/>
        <end position="410"/>
    </location>
    <ligand>
        <name>meso-2,6-diaminopimelate</name>
        <dbReference type="ChEBI" id="CHEBI:57791"/>
    </ligand>
</feature>
<feature type="binding site" evidence="1">
    <location>
        <position position="455"/>
    </location>
    <ligand>
        <name>meso-2,6-diaminopimelate</name>
        <dbReference type="ChEBI" id="CHEBI:57791"/>
    </ligand>
</feature>
<feature type="binding site" evidence="1">
    <location>
        <position position="459"/>
    </location>
    <ligand>
        <name>meso-2,6-diaminopimelate</name>
        <dbReference type="ChEBI" id="CHEBI:57791"/>
    </ligand>
</feature>
<feature type="modified residue" description="N6-carboxylysine" evidence="1">
    <location>
        <position position="219"/>
    </location>
</feature>
<protein>
    <recommendedName>
        <fullName evidence="1">UDP-N-acetylmuramoyl-L-alanyl-D-glutamate--2,6-diaminopimelate ligase</fullName>
        <ecNumber evidence="1">6.3.2.13</ecNumber>
    </recommendedName>
    <alternativeName>
        <fullName evidence="1">Meso-A2pm-adding enzyme</fullName>
    </alternativeName>
    <alternativeName>
        <fullName evidence="1">Meso-diaminopimelate-adding enzyme</fullName>
    </alternativeName>
    <alternativeName>
        <fullName evidence="1">UDP-MurNAc-L-Ala-D-Glu:meso-diaminopimelate ligase</fullName>
    </alternativeName>
    <alternativeName>
        <fullName evidence="1">UDP-MurNAc-tripeptide synthetase</fullName>
    </alternativeName>
    <alternativeName>
        <fullName evidence="1">UDP-N-acetylmuramyl-tripeptide synthetase</fullName>
    </alternativeName>
</protein>
<gene>
    <name evidence="1" type="primary">murE</name>
    <name type="ordered locus">Atu2099</name>
    <name type="ORF">AGR_C_3809</name>
</gene>
<sequence length="489" mass="51287">MNLRDISGNAFPELKELLLSEIGAIEIGGITADSRKAAPGSLFVAVAGTKADGAAYVKDAVAKGAVAVVSGHAVEADVPVLVVTDPRLYLSLAASRFYGKQPDTMVAVTGTAGKTSVASFVRQIWAFAGHAAAQIGTTGVIAPGREDYGALTTPDPVTLHALLAELASEGVTHAAMEASSHGLDQRRLDGVHLSAAGFTNLGRDHMDYHPTIEDYMAAKMRLFDTLMEKGAPAVIFADDPWSDKAIGAAREAGLEVRTVGRNGQYLTLKRVEHFRHKQMIEVHHDGVIFEVDIPLAGDFQVANALVAAGLAMSTGVPAATALKALEKLVGAAGRLELVGQTKNGALAYVDYAHKPDALENVLTSVRPFTSGRIITVFGCGGDRDKGKRPIMGEVATRLSDIVIVTDDNPRSEDAATIRSEVMAAAAGALEIGDRAEAIRHAVSMLSHGDTLIVAGKGHEEGQIVGSVTLPFSDHEQVRSALAELEGSKI</sequence>
<organism>
    <name type="scientific">Agrobacterium fabrum (strain C58 / ATCC 33970)</name>
    <name type="common">Agrobacterium tumefaciens (strain C58)</name>
    <dbReference type="NCBI Taxonomy" id="176299"/>
    <lineage>
        <taxon>Bacteria</taxon>
        <taxon>Pseudomonadati</taxon>
        <taxon>Pseudomonadota</taxon>
        <taxon>Alphaproteobacteria</taxon>
        <taxon>Hyphomicrobiales</taxon>
        <taxon>Rhizobiaceae</taxon>
        <taxon>Rhizobium/Agrobacterium group</taxon>
        <taxon>Agrobacterium</taxon>
        <taxon>Agrobacterium tumefaciens complex</taxon>
    </lineage>
</organism>
<evidence type="ECO:0000255" key="1">
    <source>
        <dbReference type="HAMAP-Rule" id="MF_00208"/>
    </source>
</evidence>
<proteinExistence type="inferred from homology"/>
<comment type="function">
    <text evidence="1">Catalyzes the addition of meso-diaminopimelic acid to the nucleotide precursor UDP-N-acetylmuramoyl-L-alanyl-D-glutamate (UMAG) in the biosynthesis of bacterial cell-wall peptidoglycan.</text>
</comment>
<comment type="catalytic activity">
    <reaction evidence="1">
        <text>UDP-N-acetyl-alpha-D-muramoyl-L-alanyl-D-glutamate + meso-2,6-diaminopimelate + ATP = UDP-N-acetyl-alpha-D-muramoyl-L-alanyl-gamma-D-glutamyl-meso-2,6-diaminopimelate + ADP + phosphate + H(+)</text>
        <dbReference type="Rhea" id="RHEA:23676"/>
        <dbReference type="ChEBI" id="CHEBI:15378"/>
        <dbReference type="ChEBI" id="CHEBI:30616"/>
        <dbReference type="ChEBI" id="CHEBI:43474"/>
        <dbReference type="ChEBI" id="CHEBI:57791"/>
        <dbReference type="ChEBI" id="CHEBI:83900"/>
        <dbReference type="ChEBI" id="CHEBI:83905"/>
        <dbReference type="ChEBI" id="CHEBI:456216"/>
        <dbReference type="EC" id="6.3.2.13"/>
    </reaction>
</comment>
<comment type="cofactor">
    <cofactor evidence="1">
        <name>Mg(2+)</name>
        <dbReference type="ChEBI" id="CHEBI:18420"/>
    </cofactor>
</comment>
<comment type="pathway">
    <text evidence="1">Cell wall biogenesis; peptidoglycan biosynthesis.</text>
</comment>
<comment type="subcellular location">
    <subcellularLocation>
        <location evidence="1">Cytoplasm</location>
    </subcellularLocation>
</comment>
<comment type="PTM">
    <text evidence="1">Carboxylation is probably crucial for Mg(2+) binding and, consequently, for the gamma-phosphate positioning of ATP.</text>
</comment>
<comment type="similarity">
    <text evidence="1">Belongs to the MurCDEF family. MurE subfamily.</text>
</comment>
<name>MURE_AGRFC</name>
<keyword id="KW-0067">ATP-binding</keyword>
<keyword id="KW-0131">Cell cycle</keyword>
<keyword id="KW-0132">Cell division</keyword>
<keyword id="KW-0133">Cell shape</keyword>
<keyword id="KW-0961">Cell wall biogenesis/degradation</keyword>
<keyword id="KW-0963">Cytoplasm</keyword>
<keyword id="KW-0436">Ligase</keyword>
<keyword id="KW-0460">Magnesium</keyword>
<keyword id="KW-0547">Nucleotide-binding</keyword>
<keyword id="KW-0573">Peptidoglycan synthesis</keyword>
<keyword id="KW-1185">Reference proteome</keyword>
<reference key="1">
    <citation type="journal article" date="2001" name="Science">
        <title>The genome of the natural genetic engineer Agrobacterium tumefaciens C58.</title>
        <authorList>
            <person name="Wood D.W."/>
            <person name="Setubal J.C."/>
            <person name="Kaul R."/>
            <person name="Monks D.E."/>
            <person name="Kitajima J.P."/>
            <person name="Okura V.K."/>
            <person name="Zhou Y."/>
            <person name="Chen L."/>
            <person name="Wood G.E."/>
            <person name="Almeida N.F. Jr."/>
            <person name="Woo L."/>
            <person name="Chen Y."/>
            <person name="Paulsen I.T."/>
            <person name="Eisen J.A."/>
            <person name="Karp P.D."/>
            <person name="Bovee D. Sr."/>
            <person name="Chapman P."/>
            <person name="Clendenning J."/>
            <person name="Deatherage G."/>
            <person name="Gillet W."/>
            <person name="Grant C."/>
            <person name="Kutyavin T."/>
            <person name="Levy R."/>
            <person name="Li M.-J."/>
            <person name="McClelland E."/>
            <person name="Palmieri A."/>
            <person name="Raymond C."/>
            <person name="Rouse G."/>
            <person name="Saenphimmachak C."/>
            <person name="Wu Z."/>
            <person name="Romero P."/>
            <person name="Gordon D."/>
            <person name="Zhang S."/>
            <person name="Yoo H."/>
            <person name="Tao Y."/>
            <person name="Biddle P."/>
            <person name="Jung M."/>
            <person name="Krespan W."/>
            <person name="Perry M."/>
            <person name="Gordon-Kamm B."/>
            <person name="Liao L."/>
            <person name="Kim S."/>
            <person name="Hendrick C."/>
            <person name="Zhao Z.-Y."/>
            <person name="Dolan M."/>
            <person name="Chumley F."/>
            <person name="Tingey S.V."/>
            <person name="Tomb J.-F."/>
            <person name="Gordon M.P."/>
            <person name="Olson M.V."/>
            <person name="Nester E.W."/>
        </authorList>
    </citation>
    <scope>NUCLEOTIDE SEQUENCE [LARGE SCALE GENOMIC DNA]</scope>
    <source>
        <strain>C58 / ATCC 33970</strain>
    </source>
</reference>
<reference key="2">
    <citation type="journal article" date="2001" name="Science">
        <title>Genome sequence of the plant pathogen and biotechnology agent Agrobacterium tumefaciens C58.</title>
        <authorList>
            <person name="Goodner B."/>
            <person name="Hinkle G."/>
            <person name="Gattung S."/>
            <person name="Miller N."/>
            <person name="Blanchard M."/>
            <person name="Qurollo B."/>
            <person name="Goldman B.S."/>
            <person name="Cao Y."/>
            <person name="Askenazi M."/>
            <person name="Halling C."/>
            <person name="Mullin L."/>
            <person name="Houmiel K."/>
            <person name="Gordon J."/>
            <person name="Vaudin M."/>
            <person name="Iartchouk O."/>
            <person name="Epp A."/>
            <person name="Liu F."/>
            <person name="Wollam C."/>
            <person name="Allinger M."/>
            <person name="Doughty D."/>
            <person name="Scott C."/>
            <person name="Lappas C."/>
            <person name="Markelz B."/>
            <person name="Flanagan C."/>
            <person name="Crowell C."/>
            <person name="Gurson J."/>
            <person name="Lomo C."/>
            <person name="Sear C."/>
            <person name="Strub G."/>
            <person name="Cielo C."/>
            <person name="Slater S."/>
        </authorList>
    </citation>
    <scope>NUCLEOTIDE SEQUENCE [LARGE SCALE GENOMIC DNA]</scope>
    <source>
        <strain>C58 / ATCC 33970</strain>
    </source>
</reference>
<dbReference type="EC" id="6.3.2.13" evidence="1"/>
<dbReference type="EMBL" id="AE007869">
    <property type="protein sequence ID" value="AAK87849.2"/>
    <property type="molecule type" value="Genomic_DNA"/>
</dbReference>
<dbReference type="PIR" id="AD2834">
    <property type="entry name" value="AD2834"/>
</dbReference>
<dbReference type="PIR" id="H97611">
    <property type="entry name" value="H97611"/>
</dbReference>
<dbReference type="RefSeq" id="NP_355064.2">
    <property type="nucleotide sequence ID" value="NC_003062.2"/>
</dbReference>
<dbReference type="RefSeq" id="WP_010972057.1">
    <property type="nucleotide sequence ID" value="NC_003062.2"/>
</dbReference>
<dbReference type="SMR" id="Q8UDM3"/>
<dbReference type="STRING" id="176299.Atu2099"/>
<dbReference type="EnsemblBacteria" id="AAK87849">
    <property type="protein sequence ID" value="AAK87849"/>
    <property type="gene ID" value="Atu2099"/>
</dbReference>
<dbReference type="GeneID" id="1134137"/>
<dbReference type="KEGG" id="atu:Atu2099"/>
<dbReference type="PATRIC" id="fig|176299.10.peg.2113"/>
<dbReference type="eggNOG" id="COG0769">
    <property type="taxonomic scope" value="Bacteria"/>
</dbReference>
<dbReference type="HOGENOM" id="CLU_022291_3_1_5"/>
<dbReference type="OrthoDB" id="9800958at2"/>
<dbReference type="PhylomeDB" id="Q8UDM3"/>
<dbReference type="BioCyc" id="AGRO:ATU2099-MONOMER"/>
<dbReference type="UniPathway" id="UPA00219"/>
<dbReference type="Proteomes" id="UP000000813">
    <property type="component" value="Chromosome circular"/>
</dbReference>
<dbReference type="GO" id="GO:0005737">
    <property type="term" value="C:cytoplasm"/>
    <property type="evidence" value="ECO:0007669"/>
    <property type="project" value="UniProtKB-SubCell"/>
</dbReference>
<dbReference type="GO" id="GO:0005524">
    <property type="term" value="F:ATP binding"/>
    <property type="evidence" value="ECO:0007669"/>
    <property type="project" value="UniProtKB-UniRule"/>
</dbReference>
<dbReference type="GO" id="GO:0000287">
    <property type="term" value="F:magnesium ion binding"/>
    <property type="evidence" value="ECO:0007669"/>
    <property type="project" value="UniProtKB-UniRule"/>
</dbReference>
<dbReference type="GO" id="GO:0008765">
    <property type="term" value="F:UDP-N-acetylmuramoylalanyl-D-glutamate-2,6-diaminopimelate ligase activity"/>
    <property type="evidence" value="ECO:0007669"/>
    <property type="project" value="UniProtKB-UniRule"/>
</dbReference>
<dbReference type="GO" id="GO:0051301">
    <property type="term" value="P:cell division"/>
    <property type="evidence" value="ECO:0007669"/>
    <property type="project" value="UniProtKB-KW"/>
</dbReference>
<dbReference type="GO" id="GO:0071555">
    <property type="term" value="P:cell wall organization"/>
    <property type="evidence" value="ECO:0007669"/>
    <property type="project" value="UniProtKB-KW"/>
</dbReference>
<dbReference type="GO" id="GO:0009252">
    <property type="term" value="P:peptidoglycan biosynthetic process"/>
    <property type="evidence" value="ECO:0007669"/>
    <property type="project" value="UniProtKB-UniRule"/>
</dbReference>
<dbReference type="GO" id="GO:0008360">
    <property type="term" value="P:regulation of cell shape"/>
    <property type="evidence" value="ECO:0007669"/>
    <property type="project" value="UniProtKB-KW"/>
</dbReference>
<dbReference type="Gene3D" id="3.90.190.20">
    <property type="entry name" value="Mur ligase, C-terminal domain"/>
    <property type="match status" value="1"/>
</dbReference>
<dbReference type="Gene3D" id="3.40.1190.10">
    <property type="entry name" value="Mur-like, catalytic domain"/>
    <property type="match status" value="1"/>
</dbReference>
<dbReference type="Gene3D" id="3.40.1390.10">
    <property type="entry name" value="MurE/MurF, N-terminal domain"/>
    <property type="match status" value="1"/>
</dbReference>
<dbReference type="HAMAP" id="MF_00208">
    <property type="entry name" value="MurE"/>
    <property type="match status" value="1"/>
</dbReference>
<dbReference type="InterPro" id="IPR036565">
    <property type="entry name" value="Mur-like_cat_sf"/>
</dbReference>
<dbReference type="InterPro" id="IPR004101">
    <property type="entry name" value="Mur_ligase_C"/>
</dbReference>
<dbReference type="InterPro" id="IPR036615">
    <property type="entry name" value="Mur_ligase_C_dom_sf"/>
</dbReference>
<dbReference type="InterPro" id="IPR013221">
    <property type="entry name" value="Mur_ligase_cen"/>
</dbReference>
<dbReference type="InterPro" id="IPR000713">
    <property type="entry name" value="Mur_ligase_N"/>
</dbReference>
<dbReference type="InterPro" id="IPR035911">
    <property type="entry name" value="MurE/MurF_N"/>
</dbReference>
<dbReference type="InterPro" id="IPR005761">
    <property type="entry name" value="UDP-N-AcMur-Glu-dNH2Pim_ligase"/>
</dbReference>
<dbReference type="NCBIfam" id="TIGR01085">
    <property type="entry name" value="murE"/>
    <property type="match status" value="1"/>
</dbReference>
<dbReference type="NCBIfam" id="NF001124">
    <property type="entry name" value="PRK00139.1-2"/>
    <property type="match status" value="1"/>
</dbReference>
<dbReference type="NCBIfam" id="NF001126">
    <property type="entry name" value="PRK00139.1-4"/>
    <property type="match status" value="1"/>
</dbReference>
<dbReference type="PANTHER" id="PTHR23135">
    <property type="entry name" value="MUR LIGASE FAMILY MEMBER"/>
    <property type="match status" value="1"/>
</dbReference>
<dbReference type="PANTHER" id="PTHR23135:SF4">
    <property type="entry name" value="UDP-N-ACETYLMURAMOYL-L-ALANYL-D-GLUTAMATE--2,6-DIAMINOPIMELATE LIGASE MURE HOMOLOG, CHLOROPLASTIC"/>
    <property type="match status" value="1"/>
</dbReference>
<dbReference type="Pfam" id="PF01225">
    <property type="entry name" value="Mur_ligase"/>
    <property type="match status" value="1"/>
</dbReference>
<dbReference type="Pfam" id="PF02875">
    <property type="entry name" value="Mur_ligase_C"/>
    <property type="match status" value="1"/>
</dbReference>
<dbReference type="Pfam" id="PF08245">
    <property type="entry name" value="Mur_ligase_M"/>
    <property type="match status" value="1"/>
</dbReference>
<dbReference type="SUPFAM" id="SSF53623">
    <property type="entry name" value="MurD-like peptide ligases, catalytic domain"/>
    <property type="match status" value="1"/>
</dbReference>
<dbReference type="SUPFAM" id="SSF53244">
    <property type="entry name" value="MurD-like peptide ligases, peptide-binding domain"/>
    <property type="match status" value="1"/>
</dbReference>
<dbReference type="SUPFAM" id="SSF63418">
    <property type="entry name" value="MurE/MurF N-terminal domain"/>
    <property type="match status" value="1"/>
</dbReference>